<gene>
    <name evidence="1" type="primary">rpsK</name>
    <name type="ordered locus">CTL0770</name>
</gene>
<protein>
    <recommendedName>
        <fullName evidence="1">Small ribosomal subunit protein uS11</fullName>
    </recommendedName>
    <alternativeName>
        <fullName evidence="2">30S ribosomal protein S11</fullName>
    </alternativeName>
</protein>
<dbReference type="EMBL" id="L33834">
    <property type="protein sequence ID" value="AAA74988.1"/>
    <property type="molecule type" value="Genomic_DNA"/>
</dbReference>
<dbReference type="EMBL" id="AM884176">
    <property type="protein sequence ID" value="CAP04208.1"/>
    <property type="molecule type" value="Genomic_DNA"/>
</dbReference>
<dbReference type="PIR" id="I40745">
    <property type="entry name" value="I40745"/>
</dbReference>
<dbReference type="RefSeq" id="WP_009873865.1">
    <property type="nucleotide sequence ID" value="NC_010287.1"/>
</dbReference>
<dbReference type="RefSeq" id="YP_001654841.1">
    <property type="nucleotide sequence ID" value="NC_010287.1"/>
</dbReference>
<dbReference type="SMR" id="B0B882"/>
<dbReference type="KEGG" id="ctb:CTL0770"/>
<dbReference type="PATRIC" id="fig|471472.4.peg.826"/>
<dbReference type="HOGENOM" id="CLU_072439_5_0_0"/>
<dbReference type="Proteomes" id="UP001154402">
    <property type="component" value="Chromosome"/>
</dbReference>
<dbReference type="GO" id="GO:1990904">
    <property type="term" value="C:ribonucleoprotein complex"/>
    <property type="evidence" value="ECO:0007669"/>
    <property type="project" value="UniProtKB-KW"/>
</dbReference>
<dbReference type="GO" id="GO:0005840">
    <property type="term" value="C:ribosome"/>
    <property type="evidence" value="ECO:0007669"/>
    <property type="project" value="UniProtKB-KW"/>
</dbReference>
<dbReference type="GO" id="GO:0019843">
    <property type="term" value="F:rRNA binding"/>
    <property type="evidence" value="ECO:0007669"/>
    <property type="project" value="UniProtKB-UniRule"/>
</dbReference>
<dbReference type="GO" id="GO:0003735">
    <property type="term" value="F:structural constituent of ribosome"/>
    <property type="evidence" value="ECO:0007669"/>
    <property type="project" value="InterPro"/>
</dbReference>
<dbReference type="GO" id="GO:0006412">
    <property type="term" value="P:translation"/>
    <property type="evidence" value="ECO:0007669"/>
    <property type="project" value="UniProtKB-UniRule"/>
</dbReference>
<dbReference type="FunFam" id="3.30.420.80:FF:000004">
    <property type="entry name" value="30S ribosomal protein S11"/>
    <property type="match status" value="1"/>
</dbReference>
<dbReference type="Gene3D" id="3.30.420.80">
    <property type="entry name" value="Ribosomal protein S11"/>
    <property type="match status" value="1"/>
</dbReference>
<dbReference type="HAMAP" id="MF_01310">
    <property type="entry name" value="Ribosomal_uS11"/>
    <property type="match status" value="1"/>
</dbReference>
<dbReference type="InterPro" id="IPR001971">
    <property type="entry name" value="Ribosomal_uS11"/>
</dbReference>
<dbReference type="InterPro" id="IPR019981">
    <property type="entry name" value="Ribosomal_uS11_bac-type"/>
</dbReference>
<dbReference type="InterPro" id="IPR018102">
    <property type="entry name" value="Ribosomal_uS11_CS"/>
</dbReference>
<dbReference type="InterPro" id="IPR036967">
    <property type="entry name" value="Ribosomal_uS11_sf"/>
</dbReference>
<dbReference type="NCBIfam" id="NF003698">
    <property type="entry name" value="PRK05309.1"/>
    <property type="match status" value="1"/>
</dbReference>
<dbReference type="NCBIfam" id="TIGR03632">
    <property type="entry name" value="uS11_bact"/>
    <property type="match status" value="1"/>
</dbReference>
<dbReference type="PANTHER" id="PTHR11759">
    <property type="entry name" value="40S RIBOSOMAL PROTEIN S14/30S RIBOSOMAL PROTEIN S11"/>
    <property type="match status" value="1"/>
</dbReference>
<dbReference type="Pfam" id="PF00411">
    <property type="entry name" value="Ribosomal_S11"/>
    <property type="match status" value="1"/>
</dbReference>
<dbReference type="PIRSF" id="PIRSF002131">
    <property type="entry name" value="Ribosomal_S11"/>
    <property type="match status" value="1"/>
</dbReference>
<dbReference type="SUPFAM" id="SSF53137">
    <property type="entry name" value="Translational machinery components"/>
    <property type="match status" value="1"/>
</dbReference>
<dbReference type="PROSITE" id="PS00054">
    <property type="entry name" value="RIBOSOMAL_S11"/>
    <property type="match status" value="1"/>
</dbReference>
<comment type="function">
    <text evidence="1">Located on the platform of the 30S subunit, it bridges several disparate RNA helices of the 16S rRNA. Forms part of the Shine-Dalgarno cleft in the 70S ribosome.</text>
</comment>
<comment type="subunit">
    <text evidence="1">Part of the 30S ribosomal subunit. Interacts with proteins S7 and S18. Binds to IF-3.</text>
</comment>
<comment type="similarity">
    <text evidence="1">Belongs to the universal ribosomal protein uS11 family.</text>
</comment>
<feature type="chain" id="PRO_1000141069" description="Small ribosomal subunit protein uS11">
    <location>
        <begin position="1"/>
        <end position="132"/>
    </location>
</feature>
<feature type="sequence conflict" description="In Ref. 1; AAA74988." evidence="2" ref="1">
    <original>S</original>
    <variation>P</variation>
    <location>
        <position position="56"/>
    </location>
</feature>
<proteinExistence type="inferred from homology"/>
<accession>B0B882</accession>
<accession>O84516</accession>
<accession>P47761</accession>
<name>RS11_CHLT2</name>
<reference key="1">
    <citation type="journal article" date="1995" name="J. Bacteriol.">
        <title>Chlamydia trachomatis RNA polymerase alpha subunit: sequence and structural analysis.</title>
        <authorList>
            <person name="Gu L.J."/>
            <person name="Wenman W.M."/>
            <person name="Remacha M."/>
            <person name="Meuser R.U."/>
            <person name="Coffin J.M."/>
            <person name="Kaul R."/>
        </authorList>
    </citation>
    <scope>NUCLEOTIDE SEQUENCE [GENOMIC DNA]</scope>
</reference>
<reference key="2">
    <citation type="journal article" date="2008" name="Genome Res.">
        <title>Chlamydia trachomatis: genome sequence analysis of lymphogranuloma venereum isolates.</title>
        <authorList>
            <person name="Thomson N.R."/>
            <person name="Holden M.T.G."/>
            <person name="Carder C."/>
            <person name="Lennard N."/>
            <person name="Lockey S.J."/>
            <person name="Marsh P."/>
            <person name="Skipp P."/>
            <person name="O'Connor C.D."/>
            <person name="Goodhead I."/>
            <person name="Norbertzcak H."/>
            <person name="Harris B."/>
            <person name="Ormond D."/>
            <person name="Rance R."/>
            <person name="Quail M.A."/>
            <person name="Parkhill J."/>
            <person name="Stephens R.S."/>
            <person name="Clarke I.N."/>
        </authorList>
    </citation>
    <scope>NUCLEOTIDE SEQUENCE [LARGE SCALE GENOMIC DNA]</scope>
    <source>
        <strain>ATCC VR-902B / DSM 19102 / 434/Bu</strain>
    </source>
</reference>
<organism>
    <name type="scientific">Chlamydia trachomatis serovar L2 (strain ATCC VR-902B / DSM 19102 / 434/Bu)</name>
    <dbReference type="NCBI Taxonomy" id="471472"/>
    <lineage>
        <taxon>Bacteria</taxon>
        <taxon>Pseudomonadati</taxon>
        <taxon>Chlamydiota</taxon>
        <taxon>Chlamydiia</taxon>
        <taxon>Chlamydiales</taxon>
        <taxon>Chlamydiaceae</taxon>
        <taxon>Chlamydia/Chlamydophila group</taxon>
        <taxon>Chlamydia</taxon>
    </lineage>
</organism>
<keyword id="KW-0687">Ribonucleoprotein</keyword>
<keyword id="KW-0689">Ribosomal protein</keyword>
<keyword id="KW-0694">RNA-binding</keyword>
<keyword id="KW-0699">rRNA-binding</keyword>
<sequence>MVKNQAQKRGVKRKQVKNIPSGVVHVKATFNNTIVTITDPAGNVISWASAGKVGYSGSRKSSAFAATVAAQDAAKAAMSSGLKEVEVGLKGTGAGRESAVRALISSGLIVSVIRDETPVPHNGCRPRKRRRV</sequence>
<evidence type="ECO:0000255" key="1">
    <source>
        <dbReference type="HAMAP-Rule" id="MF_01310"/>
    </source>
</evidence>
<evidence type="ECO:0000305" key="2"/>